<protein>
    <recommendedName>
        <fullName evidence="2">N(4)-acetylcytidine amidohydrolase</fullName>
        <shortName evidence="2">ac4C amidohydrolase</shortName>
        <ecNumber evidence="2">3.5.1.135</ecNumber>
    </recommendedName>
</protein>
<organism>
    <name type="scientific">Shewanella sp. (strain ANA-3)</name>
    <dbReference type="NCBI Taxonomy" id="94122"/>
    <lineage>
        <taxon>Bacteria</taxon>
        <taxon>Pseudomonadati</taxon>
        <taxon>Pseudomonadota</taxon>
        <taxon>Gammaproteobacteria</taxon>
        <taxon>Alteromonadales</taxon>
        <taxon>Shewanellaceae</taxon>
        <taxon>Shewanella</taxon>
    </lineage>
</organism>
<reference key="1">
    <citation type="submission" date="2006-09" db="EMBL/GenBank/DDBJ databases">
        <title>Complete sequence of chromosome 1 of Shewanella sp. ANA-3.</title>
        <authorList>
            <person name="Copeland A."/>
            <person name="Lucas S."/>
            <person name="Lapidus A."/>
            <person name="Barry K."/>
            <person name="Detter J.C."/>
            <person name="Glavina del Rio T."/>
            <person name="Hammon N."/>
            <person name="Israni S."/>
            <person name="Dalin E."/>
            <person name="Tice H."/>
            <person name="Pitluck S."/>
            <person name="Chertkov O."/>
            <person name="Brettin T."/>
            <person name="Bruce D."/>
            <person name="Han C."/>
            <person name="Tapia R."/>
            <person name="Gilna P."/>
            <person name="Schmutz J."/>
            <person name="Larimer F."/>
            <person name="Land M."/>
            <person name="Hauser L."/>
            <person name="Kyrpides N."/>
            <person name="Kim E."/>
            <person name="Newman D."/>
            <person name="Salticov C."/>
            <person name="Konstantinidis K."/>
            <person name="Klappenback J."/>
            <person name="Tiedje J."/>
            <person name="Richardson P."/>
        </authorList>
    </citation>
    <scope>NUCLEOTIDE SEQUENCE [LARGE SCALE GENOMIC DNA]</scope>
    <source>
        <strain>ANA-3</strain>
    </source>
</reference>
<name>AC4CH_SHESA</name>
<sequence>MLTKITFFERFEQDILSGAKTITLRNEAESHVFAGQILPVSTFEADRWFCDIKVIEVVPVLFSALTEQHAAQENMTLPELRRVIQEIYPGLEQLFQIHFCVVNTRAHPIN</sequence>
<proteinExistence type="inferred from homology"/>
<evidence type="ECO:0000255" key="1"/>
<evidence type="ECO:0000255" key="2">
    <source>
        <dbReference type="HAMAP-Rule" id="MF_00684"/>
    </source>
</evidence>
<comment type="function">
    <text evidence="2">Catalyzes the hydrolysis of N(4)-acetylcytidine (ac4C).</text>
</comment>
<comment type="catalytic activity">
    <reaction evidence="2">
        <text>N(4)-acetylcytidine + H2O = cytidine + acetate + H(+)</text>
        <dbReference type="Rhea" id="RHEA:62932"/>
        <dbReference type="ChEBI" id="CHEBI:15377"/>
        <dbReference type="ChEBI" id="CHEBI:15378"/>
        <dbReference type="ChEBI" id="CHEBI:17562"/>
        <dbReference type="ChEBI" id="CHEBI:30089"/>
        <dbReference type="ChEBI" id="CHEBI:70989"/>
        <dbReference type="EC" id="3.5.1.135"/>
    </reaction>
</comment>
<comment type="catalytic activity">
    <reaction evidence="2">
        <text>N(4)-acetyl-2'-deoxycytidine + H2O = 2'-deoxycytidine + acetate + H(+)</text>
        <dbReference type="Rhea" id="RHEA:62936"/>
        <dbReference type="ChEBI" id="CHEBI:15377"/>
        <dbReference type="ChEBI" id="CHEBI:15378"/>
        <dbReference type="ChEBI" id="CHEBI:15698"/>
        <dbReference type="ChEBI" id="CHEBI:30089"/>
        <dbReference type="ChEBI" id="CHEBI:146133"/>
        <dbReference type="EC" id="3.5.1.135"/>
    </reaction>
</comment>
<comment type="catalytic activity">
    <reaction evidence="2">
        <text>N(4)-acetylcytosine + H2O = cytosine + acetate + H(+)</text>
        <dbReference type="Rhea" id="RHEA:62940"/>
        <dbReference type="ChEBI" id="CHEBI:15377"/>
        <dbReference type="ChEBI" id="CHEBI:15378"/>
        <dbReference type="ChEBI" id="CHEBI:16040"/>
        <dbReference type="ChEBI" id="CHEBI:30089"/>
        <dbReference type="ChEBI" id="CHEBI:146134"/>
        <dbReference type="EC" id="3.5.1.135"/>
    </reaction>
</comment>
<comment type="similarity">
    <text evidence="2">Belongs to the N(4)-acetylcytidine amidohydrolase family.</text>
</comment>
<keyword id="KW-0378">Hydrolase</keyword>
<dbReference type="EC" id="3.5.1.135" evidence="2"/>
<dbReference type="EMBL" id="CP000469">
    <property type="protein sequence ID" value="ABK47934.1"/>
    <property type="molecule type" value="Genomic_DNA"/>
</dbReference>
<dbReference type="RefSeq" id="WP_011716728.1">
    <property type="nucleotide sequence ID" value="NC_008577.1"/>
</dbReference>
<dbReference type="SMR" id="A0KVW5"/>
<dbReference type="STRING" id="94122.Shewana3_1701"/>
<dbReference type="KEGG" id="shn:Shewana3_1701"/>
<dbReference type="eggNOG" id="COG3097">
    <property type="taxonomic scope" value="Bacteria"/>
</dbReference>
<dbReference type="HOGENOM" id="CLU_152586_0_0_6"/>
<dbReference type="OrthoDB" id="8590202at2"/>
<dbReference type="Proteomes" id="UP000002589">
    <property type="component" value="Chromosome"/>
</dbReference>
<dbReference type="GO" id="GO:0005829">
    <property type="term" value="C:cytosol"/>
    <property type="evidence" value="ECO:0007669"/>
    <property type="project" value="TreeGrafter"/>
</dbReference>
<dbReference type="GO" id="GO:0016813">
    <property type="term" value="F:hydrolase activity, acting on carbon-nitrogen (but not peptide) bonds, in linear amidines"/>
    <property type="evidence" value="ECO:0007669"/>
    <property type="project" value="UniProtKB-UniRule"/>
</dbReference>
<dbReference type="GO" id="GO:0106251">
    <property type="term" value="F:N4-acetylcytidine amidohydrolase activity"/>
    <property type="evidence" value="ECO:0007669"/>
    <property type="project" value="RHEA"/>
</dbReference>
<dbReference type="CDD" id="cd06552">
    <property type="entry name" value="ASCH_yqfb_like"/>
    <property type="match status" value="1"/>
</dbReference>
<dbReference type="Gene3D" id="2.30.130.30">
    <property type="entry name" value="Hypothetical protein"/>
    <property type="match status" value="1"/>
</dbReference>
<dbReference type="HAMAP" id="MF_00684">
    <property type="entry name" value="ac4C_amidohydr"/>
    <property type="match status" value="1"/>
</dbReference>
<dbReference type="InterPro" id="IPR008314">
    <property type="entry name" value="AC4CH"/>
</dbReference>
<dbReference type="InterPro" id="IPR007374">
    <property type="entry name" value="ASCH_domain"/>
</dbReference>
<dbReference type="InterPro" id="IPR015947">
    <property type="entry name" value="PUA-like_sf"/>
</dbReference>
<dbReference type="NCBIfam" id="NF003443">
    <property type="entry name" value="PRK04980.1"/>
    <property type="match status" value="1"/>
</dbReference>
<dbReference type="PANTHER" id="PTHR38088">
    <property type="entry name" value="UCP029143 FAMILY PROTEIN"/>
    <property type="match status" value="1"/>
</dbReference>
<dbReference type="PANTHER" id="PTHR38088:SF2">
    <property type="entry name" value="UCP029143 FAMILY PROTEIN"/>
    <property type="match status" value="1"/>
</dbReference>
<dbReference type="Pfam" id="PF04266">
    <property type="entry name" value="ASCH"/>
    <property type="match status" value="1"/>
</dbReference>
<dbReference type="PIRSF" id="PIRSF029143">
    <property type="entry name" value="UCP029143"/>
    <property type="match status" value="1"/>
</dbReference>
<dbReference type="SMART" id="SM01022">
    <property type="entry name" value="ASCH"/>
    <property type="match status" value="1"/>
</dbReference>
<dbReference type="SUPFAM" id="SSF88697">
    <property type="entry name" value="PUA domain-like"/>
    <property type="match status" value="1"/>
</dbReference>
<feature type="chain" id="PRO_1000044956" description="N(4)-acetylcytidine amidohydrolase">
    <location>
        <begin position="1"/>
        <end position="110"/>
    </location>
</feature>
<feature type="domain" description="ASCH" evidence="1">
    <location>
        <begin position="6"/>
        <end position="93"/>
    </location>
</feature>
<feature type="active site" description="Proton acceptor" evidence="2">
    <location>
        <position position="20"/>
    </location>
</feature>
<feature type="active site" description="Nucleophile" evidence="2">
    <location>
        <position position="23"/>
    </location>
</feature>
<feature type="active site" description="Proton donor" evidence="2">
    <location>
        <position position="73"/>
    </location>
</feature>
<accession>A0KVW5</accession>
<gene>
    <name type="ordered locus">Shewana3_1701</name>
</gene>